<protein>
    <recommendedName>
        <fullName evidence="1">Octanoyltransferase</fullName>
        <ecNumber evidence="1">2.3.1.181</ecNumber>
    </recommendedName>
    <alternativeName>
        <fullName evidence="1">Lipoate-protein ligase B</fullName>
    </alternativeName>
    <alternativeName>
        <fullName evidence="1">Lipoyl/octanoyl transferase</fullName>
    </alternativeName>
    <alternativeName>
        <fullName evidence="1">Octanoyl-[acyl-carrier-protein]-protein N-octanoyltransferase</fullName>
    </alternativeName>
</protein>
<organism>
    <name type="scientific">Brucella abortus (strain 2308)</name>
    <dbReference type="NCBI Taxonomy" id="359391"/>
    <lineage>
        <taxon>Bacteria</taxon>
        <taxon>Pseudomonadati</taxon>
        <taxon>Pseudomonadota</taxon>
        <taxon>Alphaproteobacteria</taxon>
        <taxon>Hyphomicrobiales</taxon>
        <taxon>Brucellaceae</taxon>
        <taxon>Brucella/Ochrobactrum group</taxon>
        <taxon>Brucella</taxon>
    </lineage>
</organism>
<dbReference type="EC" id="2.3.1.181" evidence="1"/>
<dbReference type="EMBL" id="AM040265">
    <property type="protein sequence ID" value="CAJ12817.1"/>
    <property type="molecule type" value="Genomic_DNA"/>
</dbReference>
<dbReference type="SMR" id="Q2YKK8"/>
<dbReference type="STRING" id="359391.BAB2_0651"/>
<dbReference type="KEGG" id="bmf:BAB2_0651"/>
<dbReference type="HOGENOM" id="CLU_035168_3_0_5"/>
<dbReference type="PhylomeDB" id="Q2YKK8"/>
<dbReference type="UniPathway" id="UPA00538">
    <property type="reaction ID" value="UER00592"/>
</dbReference>
<dbReference type="Proteomes" id="UP000002719">
    <property type="component" value="Chromosome II"/>
</dbReference>
<dbReference type="GO" id="GO:0005737">
    <property type="term" value="C:cytoplasm"/>
    <property type="evidence" value="ECO:0007669"/>
    <property type="project" value="UniProtKB-SubCell"/>
</dbReference>
<dbReference type="GO" id="GO:0033819">
    <property type="term" value="F:lipoyl(octanoyl) transferase activity"/>
    <property type="evidence" value="ECO:0007669"/>
    <property type="project" value="UniProtKB-EC"/>
</dbReference>
<dbReference type="GO" id="GO:0036211">
    <property type="term" value="P:protein modification process"/>
    <property type="evidence" value="ECO:0007669"/>
    <property type="project" value="InterPro"/>
</dbReference>
<dbReference type="CDD" id="cd16444">
    <property type="entry name" value="LipB"/>
    <property type="match status" value="1"/>
</dbReference>
<dbReference type="FunFam" id="3.30.930.10:FF:000159">
    <property type="entry name" value="Octanoyltransferase"/>
    <property type="match status" value="1"/>
</dbReference>
<dbReference type="Gene3D" id="3.30.930.10">
    <property type="entry name" value="Bira Bifunctional Protein, Domain 2"/>
    <property type="match status" value="1"/>
</dbReference>
<dbReference type="HAMAP" id="MF_00013">
    <property type="entry name" value="LipB"/>
    <property type="match status" value="1"/>
</dbReference>
<dbReference type="InterPro" id="IPR045864">
    <property type="entry name" value="aa-tRNA-synth_II/BPL/LPL"/>
</dbReference>
<dbReference type="InterPro" id="IPR004143">
    <property type="entry name" value="BPL_LPL_catalytic"/>
</dbReference>
<dbReference type="InterPro" id="IPR000544">
    <property type="entry name" value="Octanoyltransferase"/>
</dbReference>
<dbReference type="InterPro" id="IPR020605">
    <property type="entry name" value="Octanoyltransferase_CS"/>
</dbReference>
<dbReference type="NCBIfam" id="TIGR00214">
    <property type="entry name" value="lipB"/>
    <property type="match status" value="1"/>
</dbReference>
<dbReference type="NCBIfam" id="NF010921">
    <property type="entry name" value="PRK14341.1"/>
    <property type="match status" value="1"/>
</dbReference>
<dbReference type="NCBIfam" id="NF010925">
    <property type="entry name" value="PRK14345.1"/>
    <property type="match status" value="1"/>
</dbReference>
<dbReference type="PANTHER" id="PTHR10993:SF7">
    <property type="entry name" value="LIPOYLTRANSFERASE 2, MITOCHONDRIAL-RELATED"/>
    <property type="match status" value="1"/>
</dbReference>
<dbReference type="PANTHER" id="PTHR10993">
    <property type="entry name" value="OCTANOYLTRANSFERASE"/>
    <property type="match status" value="1"/>
</dbReference>
<dbReference type="Pfam" id="PF21948">
    <property type="entry name" value="LplA-B_cat"/>
    <property type="match status" value="1"/>
</dbReference>
<dbReference type="SUPFAM" id="SSF55681">
    <property type="entry name" value="Class II aaRS and biotin synthetases"/>
    <property type="match status" value="1"/>
</dbReference>
<dbReference type="PROSITE" id="PS51733">
    <property type="entry name" value="BPL_LPL_CATALYTIC"/>
    <property type="match status" value="1"/>
</dbReference>
<dbReference type="PROSITE" id="PS01313">
    <property type="entry name" value="LIPB"/>
    <property type="match status" value="1"/>
</dbReference>
<name>LIPB_BRUA2</name>
<reference key="1">
    <citation type="journal article" date="2005" name="Infect. Immun.">
        <title>Whole-genome analyses of speciation events in pathogenic Brucellae.</title>
        <authorList>
            <person name="Chain P.S."/>
            <person name="Comerci D.J."/>
            <person name="Tolmasky M.E."/>
            <person name="Larimer F.W."/>
            <person name="Malfatti S.A."/>
            <person name="Vergez L.M."/>
            <person name="Aguero F."/>
            <person name="Land M.L."/>
            <person name="Ugalde R.A."/>
            <person name="Garcia E."/>
        </authorList>
    </citation>
    <scope>NUCLEOTIDE SEQUENCE [LARGE SCALE GENOMIC DNA]</scope>
    <source>
        <strain>2308</strain>
    </source>
</reference>
<evidence type="ECO:0000255" key="1">
    <source>
        <dbReference type="HAMAP-Rule" id="MF_00013"/>
    </source>
</evidence>
<evidence type="ECO:0000255" key="2">
    <source>
        <dbReference type="PROSITE-ProRule" id="PRU01067"/>
    </source>
</evidence>
<evidence type="ECO:0000256" key="3">
    <source>
        <dbReference type="SAM" id="MobiDB-lite"/>
    </source>
</evidence>
<feature type="chain" id="PRO_0000242710" description="Octanoyltransferase">
    <location>
        <begin position="1"/>
        <end position="267"/>
    </location>
</feature>
<feature type="domain" description="BPL/LPL catalytic" evidence="2">
    <location>
        <begin position="77"/>
        <end position="265"/>
    </location>
</feature>
<feature type="region of interest" description="Disordered" evidence="3">
    <location>
        <begin position="1"/>
        <end position="30"/>
    </location>
</feature>
<feature type="compositionally biased region" description="Polar residues" evidence="3">
    <location>
        <begin position="16"/>
        <end position="28"/>
    </location>
</feature>
<feature type="active site" description="Acyl-thioester intermediate" evidence="1">
    <location>
        <position position="227"/>
    </location>
</feature>
<feature type="binding site" evidence="1">
    <location>
        <begin position="116"/>
        <end position="123"/>
    </location>
    <ligand>
        <name>substrate</name>
    </ligand>
</feature>
<feature type="binding site" evidence="1">
    <location>
        <begin position="196"/>
        <end position="198"/>
    </location>
    <ligand>
        <name>substrate</name>
    </ligand>
</feature>
<feature type="binding site" evidence="1">
    <location>
        <begin position="209"/>
        <end position="211"/>
    </location>
    <ligand>
        <name>substrate</name>
    </ligand>
</feature>
<feature type="site" description="Lowers pKa of active site Cys" evidence="1">
    <location>
        <position position="193"/>
    </location>
</feature>
<accession>Q2YKK8</accession>
<proteinExistence type="inferred from homology"/>
<gene>
    <name evidence="1" type="primary">lipB</name>
    <name type="ordered locus">BAB2_0651</name>
</gene>
<keyword id="KW-0012">Acyltransferase</keyword>
<keyword id="KW-0963">Cytoplasm</keyword>
<keyword id="KW-1185">Reference proteome</keyword>
<keyword id="KW-0808">Transferase</keyword>
<comment type="function">
    <text evidence="1">Catalyzes the transfer of endogenously produced octanoic acid from octanoyl-acyl-carrier-protein onto the lipoyl domains of lipoate-dependent enzymes. Lipoyl-ACP can also act as a substrate although octanoyl-ACP is likely to be the physiological substrate.</text>
</comment>
<comment type="catalytic activity">
    <reaction evidence="1">
        <text>octanoyl-[ACP] + L-lysyl-[protein] = N(6)-octanoyl-L-lysyl-[protein] + holo-[ACP] + H(+)</text>
        <dbReference type="Rhea" id="RHEA:17665"/>
        <dbReference type="Rhea" id="RHEA-COMP:9636"/>
        <dbReference type="Rhea" id="RHEA-COMP:9685"/>
        <dbReference type="Rhea" id="RHEA-COMP:9752"/>
        <dbReference type="Rhea" id="RHEA-COMP:9928"/>
        <dbReference type="ChEBI" id="CHEBI:15378"/>
        <dbReference type="ChEBI" id="CHEBI:29969"/>
        <dbReference type="ChEBI" id="CHEBI:64479"/>
        <dbReference type="ChEBI" id="CHEBI:78463"/>
        <dbReference type="ChEBI" id="CHEBI:78809"/>
        <dbReference type="EC" id="2.3.1.181"/>
    </reaction>
</comment>
<comment type="pathway">
    <text evidence="1">Protein modification; protein lipoylation via endogenous pathway; protein N(6)-(lipoyl)lysine from octanoyl-[acyl-carrier-protein]: step 1/2.</text>
</comment>
<comment type="subcellular location">
    <subcellularLocation>
        <location evidence="1">Cytoplasm</location>
    </subcellularLocation>
</comment>
<comment type="miscellaneous">
    <text evidence="1">In the reaction, the free carboxyl group of octanoic acid is attached via an amide linkage to the epsilon-amino group of a specific lysine residue of lipoyl domains of lipoate-dependent enzymes.</text>
</comment>
<comment type="similarity">
    <text evidence="1">Belongs to the LipB family.</text>
</comment>
<sequence>MPTGKLRQKPPYAAIMTNSPVTPSTETQQPKRDALYARFLPQEADAPPVEWLIAEGLTDYEEALAFMEARVQATREGTASELVWLVEHPPLYTAGTSANAEDLLTPDRFPVFNTGRGGEYTYHGPGQRVAYVMLDLKRRREDVRAFVASLEQWIIETLAAFNIKGERREDRVGVWVVRPEKPRLADGSMCEDKIAAIGIRLRRWVSFHGIAINVEPDLSHYGGIVPCGISEHGVTSLVDLGLPVTMGDVDVALGKAFESVFGPRQTK</sequence>